<feature type="chain" id="PRO_0000188997" description="Actin-binding protein WASF3">
    <location>
        <begin position="1"/>
        <end position="501"/>
    </location>
</feature>
<feature type="domain" description="WH2" evidence="4">
    <location>
        <begin position="439"/>
        <end position="456"/>
    </location>
</feature>
<feature type="region of interest" description="Disordered" evidence="5">
    <location>
        <begin position="170"/>
        <end position="443"/>
    </location>
</feature>
<feature type="coiled-coil region" evidence="3">
    <location>
        <begin position="57"/>
        <end position="93"/>
    </location>
</feature>
<feature type="coiled-coil region" evidence="3">
    <location>
        <begin position="162"/>
        <end position="206"/>
    </location>
</feature>
<feature type="compositionally biased region" description="Basic and acidic residues" evidence="5">
    <location>
        <begin position="182"/>
        <end position="192"/>
    </location>
</feature>
<feature type="compositionally biased region" description="Polar residues" evidence="5">
    <location>
        <begin position="219"/>
        <end position="237"/>
    </location>
</feature>
<feature type="compositionally biased region" description="Polar residues" evidence="5">
    <location>
        <begin position="256"/>
        <end position="267"/>
    </location>
</feature>
<feature type="compositionally biased region" description="Pro residues" evidence="5">
    <location>
        <begin position="302"/>
        <end position="312"/>
    </location>
</feature>
<feature type="compositionally biased region" description="Pro residues" evidence="5">
    <location>
        <begin position="341"/>
        <end position="352"/>
    </location>
</feature>
<feature type="compositionally biased region" description="Pro residues" evidence="5">
    <location>
        <begin position="394"/>
        <end position="410"/>
    </location>
</feature>
<feature type="compositionally biased region" description="Low complexity" evidence="5">
    <location>
        <begin position="411"/>
        <end position="422"/>
    </location>
</feature>
<feature type="modified residue" description="Phosphotyrosine; by ABL1" evidence="2">
    <location>
        <position position="151"/>
    </location>
</feature>
<feature type="modified residue" description="Phosphotyrosine; by ABL1" evidence="2">
    <location>
        <position position="248"/>
    </location>
</feature>
<feature type="modified residue" description="Phosphotyrosine; by ABL1" evidence="2">
    <location>
        <position position="337"/>
    </location>
</feature>
<feature type="modified residue" description="Phosphotyrosine; by ABL1" evidence="2">
    <location>
        <position position="485"/>
    </location>
</feature>
<protein>
    <recommendedName>
        <fullName evidence="6">Actin-binding protein WASF3</fullName>
    </recommendedName>
    <alternativeName>
        <fullName>Protein WAVE-3</fullName>
    </alternativeName>
    <alternativeName>
        <fullName>Wiskott-Aldrich syndrome protein family member 3</fullName>
        <shortName>WASP family protein member 3</shortName>
    </alternativeName>
</protein>
<dbReference type="EMBL" id="AF454703">
    <property type="protein sequence ID" value="AAL51033.1"/>
    <property type="molecule type" value="mRNA"/>
</dbReference>
<dbReference type="EMBL" id="BC027038">
    <property type="protein sequence ID" value="AAH27038.1"/>
    <property type="molecule type" value="mRNA"/>
</dbReference>
<dbReference type="CCDS" id="CCDS19870.1"/>
<dbReference type="RefSeq" id="NP_001405168.1">
    <property type="nucleotide sequence ID" value="NM_001418239.1"/>
</dbReference>
<dbReference type="RefSeq" id="NP_001405169.1">
    <property type="nucleotide sequence ID" value="NM_001418240.1"/>
</dbReference>
<dbReference type="RefSeq" id="NP_001405170.1">
    <property type="nucleotide sequence ID" value="NM_001418241.1"/>
</dbReference>
<dbReference type="RefSeq" id="NP_660137.1">
    <property type="nucleotide sequence ID" value="NM_145155.4"/>
</dbReference>
<dbReference type="RefSeq" id="XP_006504896.1">
    <property type="nucleotide sequence ID" value="XM_006504833.5"/>
</dbReference>
<dbReference type="SMR" id="Q8VHI6"/>
<dbReference type="BioGRID" id="232846">
    <property type="interactions" value="5"/>
</dbReference>
<dbReference type="FunCoup" id="Q8VHI6">
    <property type="interactions" value="562"/>
</dbReference>
<dbReference type="STRING" id="10090.ENSMUSP00000016143"/>
<dbReference type="GlyGen" id="Q8VHI6">
    <property type="glycosylation" value="2 sites"/>
</dbReference>
<dbReference type="iPTMnet" id="Q8VHI6"/>
<dbReference type="PhosphoSitePlus" id="Q8VHI6"/>
<dbReference type="PaxDb" id="10090-ENSMUSP00000016143"/>
<dbReference type="ProteomicsDB" id="297622"/>
<dbReference type="Pumba" id="Q8VHI6"/>
<dbReference type="Antibodypedia" id="22618">
    <property type="antibodies" value="211 antibodies from 29 providers"/>
</dbReference>
<dbReference type="DNASU" id="245880"/>
<dbReference type="Ensembl" id="ENSMUST00000016143.9">
    <property type="protein sequence ID" value="ENSMUSP00000016143.8"/>
    <property type="gene ID" value="ENSMUSG00000029636.12"/>
</dbReference>
<dbReference type="GeneID" id="245880"/>
<dbReference type="KEGG" id="mmu:245880"/>
<dbReference type="UCSC" id="uc009anf.1">
    <property type="organism name" value="mouse"/>
</dbReference>
<dbReference type="AGR" id="MGI:2658986"/>
<dbReference type="CTD" id="10810"/>
<dbReference type="MGI" id="MGI:2658986">
    <property type="gene designation" value="Wasf3"/>
</dbReference>
<dbReference type="VEuPathDB" id="HostDB:ENSMUSG00000029636"/>
<dbReference type="eggNOG" id="KOG1830">
    <property type="taxonomic scope" value="Eukaryota"/>
</dbReference>
<dbReference type="GeneTree" id="ENSGT00950000182962"/>
<dbReference type="HOGENOM" id="CLU_036022_2_0_1"/>
<dbReference type="InParanoid" id="Q8VHI6"/>
<dbReference type="OMA" id="FFFDLWK"/>
<dbReference type="OrthoDB" id="1060785at2759"/>
<dbReference type="PhylomeDB" id="Q8VHI6"/>
<dbReference type="TreeFam" id="TF315031"/>
<dbReference type="Reactome" id="R-MMU-2029482">
    <property type="pathway name" value="Regulation of actin dynamics for phagocytic cup formation"/>
</dbReference>
<dbReference type="Reactome" id="R-MMU-4420097">
    <property type="pathway name" value="VEGFA-VEGFR2 Pathway"/>
</dbReference>
<dbReference type="Reactome" id="R-MMU-5663213">
    <property type="pathway name" value="RHO GTPases Activate WASPs and WAVEs"/>
</dbReference>
<dbReference type="Reactome" id="R-MMU-9013149">
    <property type="pathway name" value="RAC1 GTPase cycle"/>
</dbReference>
<dbReference type="BioGRID-ORCS" id="245880">
    <property type="hits" value="3 hits in 78 CRISPR screens"/>
</dbReference>
<dbReference type="CD-CODE" id="CE726F99">
    <property type="entry name" value="Postsynaptic density"/>
</dbReference>
<dbReference type="ChiTaRS" id="Wasf3">
    <property type="organism name" value="mouse"/>
</dbReference>
<dbReference type="PRO" id="PR:Q8VHI6"/>
<dbReference type="Proteomes" id="UP000000589">
    <property type="component" value="Chromosome 5"/>
</dbReference>
<dbReference type="RNAct" id="Q8VHI6">
    <property type="molecule type" value="protein"/>
</dbReference>
<dbReference type="Bgee" id="ENSMUSG00000029636">
    <property type="expression patterns" value="Expressed in ventral tegmental area and 207 other cell types or tissues"/>
</dbReference>
<dbReference type="ExpressionAtlas" id="Q8VHI6">
    <property type="expression patterns" value="baseline and differential"/>
</dbReference>
<dbReference type="GO" id="GO:0005737">
    <property type="term" value="C:cytoplasm"/>
    <property type="evidence" value="ECO:0007669"/>
    <property type="project" value="UniProtKB-KW"/>
</dbReference>
<dbReference type="GO" id="GO:0005856">
    <property type="term" value="C:cytoskeleton"/>
    <property type="evidence" value="ECO:0007669"/>
    <property type="project" value="UniProtKB-SubCell"/>
</dbReference>
<dbReference type="GO" id="GO:0097386">
    <property type="term" value="C:glial cell projection"/>
    <property type="evidence" value="ECO:0000314"/>
    <property type="project" value="MGI"/>
</dbReference>
<dbReference type="GO" id="GO:0098978">
    <property type="term" value="C:glutamatergic synapse"/>
    <property type="evidence" value="ECO:0000314"/>
    <property type="project" value="SynGO"/>
</dbReference>
<dbReference type="GO" id="GO:0030027">
    <property type="term" value="C:lamellipodium"/>
    <property type="evidence" value="ECO:0000314"/>
    <property type="project" value="MGI"/>
</dbReference>
<dbReference type="GO" id="GO:0098794">
    <property type="term" value="C:postsynapse"/>
    <property type="evidence" value="ECO:0000314"/>
    <property type="project" value="SynGO"/>
</dbReference>
<dbReference type="GO" id="GO:0003779">
    <property type="term" value="F:actin binding"/>
    <property type="evidence" value="ECO:0007669"/>
    <property type="project" value="UniProtKB-KW"/>
</dbReference>
<dbReference type="GO" id="GO:0030036">
    <property type="term" value="P:actin cytoskeleton organization"/>
    <property type="evidence" value="ECO:0007669"/>
    <property type="project" value="InterPro"/>
</dbReference>
<dbReference type="GO" id="GO:0007010">
    <property type="term" value="P:cytoskeleton organization"/>
    <property type="evidence" value="ECO:0000250"/>
    <property type="project" value="UniProtKB"/>
</dbReference>
<dbReference type="GO" id="GO:0030032">
    <property type="term" value="P:lamellipodium assembly"/>
    <property type="evidence" value="ECO:0000315"/>
    <property type="project" value="MGI"/>
</dbReference>
<dbReference type="GO" id="GO:0098885">
    <property type="term" value="P:modification of postsynaptic actin cytoskeleton"/>
    <property type="evidence" value="ECO:0000314"/>
    <property type="project" value="SynGO"/>
</dbReference>
<dbReference type="GO" id="GO:0014003">
    <property type="term" value="P:oligodendrocyte development"/>
    <property type="evidence" value="ECO:0000315"/>
    <property type="project" value="MGI"/>
</dbReference>
<dbReference type="GO" id="GO:0031643">
    <property type="term" value="P:positive regulation of myelination"/>
    <property type="evidence" value="ECO:0000314"/>
    <property type="project" value="MGI"/>
</dbReference>
<dbReference type="GO" id="GO:0008360">
    <property type="term" value="P:regulation of cell shape"/>
    <property type="evidence" value="ECO:0000250"/>
    <property type="project" value="UniProtKB"/>
</dbReference>
<dbReference type="CDD" id="cd22073">
    <property type="entry name" value="WH2_WAVE-3"/>
    <property type="match status" value="1"/>
</dbReference>
<dbReference type="FunFam" id="1.20.5.340:FF:000012">
    <property type="entry name" value="Wiskott-Aldrich syndrome protein family member 1"/>
    <property type="match status" value="1"/>
</dbReference>
<dbReference type="Gene3D" id="1.20.5.340">
    <property type="match status" value="1"/>
</dbReference>
<dbReference type="Gene3D" id="6.10.280.150">
    <property type="match status" value="2"/>
</dbReference>
<dbReference type="InterPro" id="IPR028288">
    <property type="entry name" value="SCAR/WAVE_fam"/>
</dbReference>
<dbReference type="InterPro" id="IPR003124">
    <property type="entry name" value="WH2_dom"/>
</dbReference>
<dbReference type="PANTHER" id="PTHR12902">
    <property type="entry name" value="WASP-1"/>
    <property type="match status" value="1"/>
</dbReference>
<dbReference type="PANTHER" id="PTHR12902:SF1">
    <property type="entry name" value="WISKOTT-ALDRICH SYNDROME PROTEIN FAMILY MEMBER"/>
    <property type="match status" value="1"/>
</dbReference>
<dbReference type="Pfam" id="PF02205">
    <property type="entry name" value="WH2"/>
    <property type="match status" value="1"/>
</dbReference>
<dbReference type="SMART" id="SM00246">
    <property type="entry name" value="WH2"/>
    <property type="match status" value="1"/>
</dbReference>
<dbReference type="PROSITE" id="PS51082">
    <property type="entry name" value="WH2"/>
    <property type="match status" value="1"/>
</dbReference>
<accession>Q8VHI6</accession>
<name>WASF3_MOUSE</name>
<comment type="function">
    <text evidence="1">Downstream effector molecules involved in the transmission of signals from tyrosine kinase receptors and small GTPases to the actin cytoskeleton. Plays a role in the regulation of cell morphology and cytoskeletal organization. Required in the control of cell shape (By similarity).</text>
</comment>
<comment type="subunit">
    <text evidence="1">Binds actin and the Arp2/3 complex.</text>
</comment>
<comment type="subcellular location">
    <subcellularLocation>
        <location evidence="1">Cytoplasm</location>
        <location evidence="1">Cytoskeleton</location>
    </subcellularLocation>
</comment>
<comment type="domain">
    <text>Binds the Arp2/3 complex through the C-terminal region and actin through verprolin homology (VPH) domain.</text>
</comment>
<comment type="PTM">
    <text evidence="1">Phosphorylation by ABL1 promotes lamellipodia formation and cell migration.</text>
</comment>
<comment type="similarity">
    <text evidence="6">Belongs to the SCAR/WAVE family.</text>
</comment>
<evidence type="ECO:0000250" key="1"/>
<evidence type="ECO:0000250" key="2">
    <source>
        <dbReference type="UniProtKB" id="Q9UPY6"/>
    </source>
</evidence>
<evidence type="ECO:0000255" key="3"/>
<evidence type="ECO:0000255" key="4">
    <source>
        <dbReference type="PROSITE-ProRule" id="PRU00406"/>
    </source>
</evidence>
<evidence type="ECO:0000256" key="5">
    <source>
        <dbReference type="SAM" id="MobiDB-lite"/>
    </source>
</evidence>
<evidence type="ECO:0000305" key="6"/>
<organism>
    <name type="scientific">Mus musculus</name>
    <name type="common">Mouse</name>
    <dbReference type="NCBI Taxonomy" id="10090"/>
    <lineage>
        <taxon>Eukaryota</taxon>
        <taxon>Metazoa</taxon>
        <taxon>Chordata</taxon>
        <taxon>Craniata</taxon>
        <taxon>Vertebrata</taxon>
        <taxon>Euteleostomi</taxon>
        <taxon>Mammalia</taxon>
        <taxon>Eutheria</taxon>
        <taxon>Euarchontoglires</taxon>
        <taxon>Glires</taxon>
        <taxon>Rodentia</taxon>
        <taxon>Myomorpha</taxon>
        <taxon>Muroidea</taxon>
        <taxon>Muridae</taxon>
        <taxon>Murinae</taxon>
        <taxon>Mus</taxon>
        <taxon>Mus</taxon>
    </lineage>
</organism>
<proteinExistence type="evidence at protein level"/>
<sequence length="501" mass="55204">MPLVKRNIEPRHLCRGALPEGVTSELECVTNSTLAAIIRQLSSLSKHAEDIFGELFNEANNFYIRANSLQDRIDRLAVKVTQLDSTVEEVSLQDINMKKAFKSSTIQDQQVVSKNSIPNPVADIYNQSDKPPPLSILTPYRDDKKDGLKFYTDPSYFFDLWKEKMLQDTEDKRKEKRRQKEQKRVDGTTREVKKVRKARNRRQEWNMMAYDKELRPDNRLSQSVHHGASSEGSLSPDTRSHTSDVTDYSYPATPNHALQAQPATPSYTAGDAPLHGTTNQGAEHEYRPSSASARHMALNRPQQPPPPPPPQAPEGSQASTSVAPADYGMLPAQIIEYYSPSGPPPPPPPPMIPSAQTAFVSPLQMPTQPPFPASAVSTYPTPPHQPSTGLLATAPPPPGPPPPPPGPPGPSSLSSSPMHGPPVAEAKRPEPAQPPISDARSDLLAAIRMGIQLKKVQEQREQEAKREPVGNDVATILSRRIAVEYSDSDDDSEFDENDWSD</sequence>
<reference key="1">
    <citation type="journal article" date="2003" name="Mamm. Genome">
        <title>Genomic organization and expression profile of the human and mouse WAVE gene family.</title>
        <authorList>
            <person name="Sossey-Alaoui K."/>
            <person name="Head K."/>
            <person name="Nowak N."/>
            <person name="Cowell J.K."/>
        </authorList>
    </citation>
    <scope>NUCLEOTIDE SEQUENCE [MRNA]</scope>
</reference>
<reference key="2">
    <citation type="journal article" date="2004" name="Genome Res.">
        <title>The status, quality, and expansion of the NIH full-length cDNA project: the Mammalian Gene Collection (MGC).</title>
        <authorList>
            <consortium name="The MGC Project Team"/>
        </authorList>
    </citation>
    <scope>NUCLEOTIDE SEQUENCE [LARGE SCALE MRNA]</scope>
    <source>
        <tissue>Eye</tissue>
    </source>
</reference>
<reference key="3">
    <citation type="journal article" date="2010" name="Cell">
        <title>A tissue-specific atlas of mouse protein phosphorylation and expression.</title>
        <authorList>
            <person name="Huttlin E.L."/>
            <person name="Jedrychowski M.P."/>
            <person name="Elias J.E."/>
            <person name="Goswami T."/>
            <person name="Rad R."/>
            <person name="Beausoleil S.A."/>
            <person name="Villen J."/>
            <person name="Haas W."/>
            <person name="Sowa M.E."/>
            <person name="Gygi S.P."/>
        </authorList>
    </citation>
    <scope>IDENTIFICATION BY MASS SPECTROMETRY [LARGE SCALE ANALYSIS]</scope>
    <source>
        <tissue>Brain</tissue>
        <tissue>Liver</tissue>
    </source>
</reference>
<gene>
    <name type="primary">Wasf3</name>
    <name type="synonym">Wave3</name>
</gene>
<keyword id="KW-0009">Actin-binding</keyword>
<keyword id="KW-0175">Coiled coil</keyword>
<keyword id="KW-0963">Cytoplasm</keyword>
<keyword id="KW-0206">Cytoskeleton</keyword>
<keyword id="KW-0597">Phosphoprotein</keyword>
<keyword id="KW-1185">Reference proteome</keyword>